<protein>
    <recommendedName>
        <fullName evidence="1">Small ribosomal subunit protein bS6</fullName>
    </recommendedName>
    <alternativeName>
        <fullName evidence="3">30S ribosomal protein S6</fullName>
    </alternativeName>
</protein>
<reference key="1">
    <citation type="submission" date="2008-02" db="EMBL/GenBank/DDBJ databases">
        <title>Complete sequence of Haemophilus somnus 2336.</title>
        <authorList>
            <consortium name="US DOE Joint Genome Institute"/>
            <person name="Siddaramappa S."/>
            <person name="Duncan A.J."/>
            <person name="Challacombe J.F."/>
            <person name="Rainey D."/>
            <person name="Gillaspy A.F."/>
            <person name="Carson M."/>
            <person name="Gipson J."/>
            <person name="Gipson M."/>
            <person name="Bruce D."/>
            <person name="Detter J.C."/>
            <person name="Han C.S."/>
            <person name="Land M."/>
            <person name="Tapia R."/>
            <person name="Thompson L.S."/>
            <person name="Orvis J."/>
            <person name="Zaitshik J."/>
            <person name="Barnes G."/>
            <person name="Brettin T.S."/>
            <person name="Dyer D.W."/>
            <person name="Inzana T.J."/>
        </authorList>
    </citation>
    <scope>NUCLEOTIDE SEQUENCE [LARGE SCALE GENOMIC DNA]</scope>
    <source>
        <strain>2336</strain>
    </source>
</reference>
<evidence type="ECO:0000255" key="1">
    <source>
        <dbReference type="HAMAP-Rule" id="MF_00360"/>
    </source>
</evidence>
<evidence type="ECO:0000256" key="2">
    <source>
        <dbReference type="SAM" id="MobiDB-lite"/>
    </source>
</evidence>
<evidence type="ECO:0000305" key="3"/>
<organism>
    <name type="scientific">Histophilus somni (strain 2336)</name>
    <name type="common">Haemophilus somnus</name>
    <dbReference type="NCBI Taxonomy" id="228400"/>
    <lineage>
        <taxon>Bacteria</taxon>
        <taxon>Pseudomonadati</taxon>
        <taxon>Pseudomonadota</taxon>
        <taxon>Gammaproteobacteria</taxon>
        <taxon>Pasteurellales</taxon>
        <taxon>Pasteurellaceae</taxon>
        <taxon>Histophilus</taxon>
    </lineage>
</organism>
<feature type="chain" id="PRO_1000079450" description="Small ribosomal subunit protein bS6">
    <location>
        <begin position="1"/>
        <end position="125"/>
    </location>
</feature>
<feature type="region of interest" description="Disordered" evidence="2">
    <location>
        <begin position="99"/>
        <end position="125"/>
    </location>
</feature>
<feature type="compositionally biased region" description="Basic and acidic residues" evidence="2">
    <location>
        <begin position="104"/>
        <end position="113"/>
    </location>
</feature>
<feature type="compositionally biased region" description="Acidic residues" evidence="2">
    <location>
        <begin position="116"/>
        <end position="125"/>
    </location>
</feature>
<dbReference type="EMBL" id="CP000947">
    <property type="protein sequence ID" value="ACA32257.1"/>
    <property type="molecule type" value="Genomic_DNA"/>
</dbReference>
<dbReference type="RefSeq" id="WP_012341431.1">
    <property type="nucleotide sequence ID" value="NC_010519.1"/>
</dbReference>
<dbReference type="SMR" id="B0US43"/>
<dbReference type="STRING" id="228400.HSM_0604"/>
<dbReference type="GeneID" id="31486886"/>
<dbReference type="KEGG" id="hsm:HSM_0604"/>
<dbReference type="HOGENOM" id="CLU_113441_6_1_6"/>
<dbReference type="GO" id="GO:0022627">
    <property type="term" value="C:cytosolic small ribosomal subunit"/>
    <property type="evidence" value="ECO:0007669"/>
    <property type="project" value="TreeGrafter"/>
</dbReference>
<dbReference type="GO" id="GO:0070181">
    <property type="term" value="F:small ribosomal subunit rRNA binding"/>
    <property type="evidence" value="ECO:0007669"/>
    <property type="project" value="TreeGrafter"/>
</dbReference>
<dbReference type="GO" id="GO:0003735">
    <property type="term" value="F:structural constituent of ribosome"/>
    <property type="evidence" value="ECO:0007669"/>
    <property type="project" value="InterPro"/>
</dbReference>
<dbReference type="GO" id="GO:0006412">
    <property type="term" value="P:translation"/>
    <property type="evidence" value="ECO:0007669"/>
    <property type="project" value="UniProtKB-UniRule"/>
</dbReference>
<dbReference type="CDD" id="cd00473">
    <property type="entry name" value="bS6"/>
    <property type="match status" value="1"/>
</dbReference>
<dbReference type="FunFam" id="3.30.70.60:FF:000003">
    <property type="entry name" value="30S ribosomal protein S6"/>
    <property type="match status" value="1"/>
</dbReference>
<dbReference type="Gene3D" id="3.30.70.60">
    <property type="match status" value="1"/>
</dbReference>
<dbReference type="HAMAP" id="MF_00360">
    <property type="entry name" value="Ribosomal_bS6"/>
    <property type="match status" value="1"/>
</dbReference>
<dbReference type="InterPro" id="IPR000529">
    <property type="entry name" value="Ribosomal_bS6"/>
</dbReference>
<dbReference type="InterPro" id="IPR020815">
    <property type="entry name" value="Ribosomal_bS6_CS"/>
</dbReference>
<dbReference type="InterPro" id="IPR035980">
    <property type="entry name" value="Ribosomal_bS6_sf"/>
</dbReference>
<dbReference type="InterPro" id="IPR020814">
    <property type="entry name" value="Ribosomal_S6_plastid/chlpt"/>
</dbReference>
<dbReference type="InterPro" id="IPR014717">
    <property type="entry name" value="Transl_elong_EF1B/ribsomal_bS6"/>
</dbReference>
<dbReference type="NCBIfam" id="TIGR00166">
    <property type="entry name" value="S6"/>
    <property type="match status" value="1"/>
</dbReference>
<dbReference type="PANTHER" id="PTHR21011">
    <property type="entry name" value="MITOCHONDRIAL 28S RIBOSOMAL PROTEIN S6"/>
    <property type="match status" value="1"/>
</dbReference>
<dbReference type="PANTHER" id="PTHR21011:SF1">
    <property type="entry name" value="SMALL RIBOSOMAL SUBUNIT PROTEIN BS6M"/>
    <property type="match status" value="1"/>
</dbReference>
<dbReference type="Pfam" id="PF01250">
    <property type="entry name" value="Ribosomal_S6"/>
    <property type="match status" value="1"/>
</dbReference>
<dbReference type="SUPFAM" id="SSF54995">
    <property type="entry name" value="Ribosomal protein S6"/>
    <property type="match status" value="1"/>
</dbReference>
<dbReference type="PROSITE" id="PS01048">
    <property type="entry name" value="RIBOSOMAL_S6"/>
    <property type="match status" value="1"/>
</dbReference>
<keyword id="KW-0687">Ribonucleoprotein</keyword>
<keyword id="KW-0689">Ribosomal protein</keyword>
<keyword id="KW-0694">RNA-binding</keyword>
<keyword id="KW-0699">rRNA-binding</keyword>
<name>RS6_HISS2</name>
<gene>
    <name evidence="1" type="primary">rpsF</name>
    <name type="ordered locus">HSM_0604</name>
</gene>
<comment type="function">
    <text evidence="1">Binds together with bS18 to 16S ribosomal RNA.</text>
</comment>
<comment type="similarity">
    <text evidence="1">Belongs to the bacterial ribosomal protein bS6 family.</text>
</comment>
<proteinExistence type="inferred from homology"/>
<sequence length="125" mass="14631">MRHYEIVFMVHPDQSEQVPGMIERYTGSVKEAGGQIHRLEDWGRRQLAYPINKLHKAHYVLMNVEAPQEVIDELETTFRYNDAVLRNVIIRTKHAVTEASPMVKAREERKPLTEVENNDFEDAEE</sequence>
<accession>B0US43</accession>